<geneLocation type="chloroplast"/>
<name>RR7_VITVI</name>
<proteinExistence type="inferred from homology"/>
<dbReference type="EMBL" id="DQ424856">
    <property type="protein sequence ID" value="ABE47580.1"/>
    <property type="molecule type" value="Genomic_DNA"/>
</dbReference>
<dbReference type="EMBL" id="DQ424856">
    <property type="protein sequence ID" value="ABE47595.1"/>
    <property type="molecule type" value="Genomic_DNA"/>
</dbReference>
<dbReference type="SMR" id="Q0ZIV9"/>
<dbReference type="FunCoup" id="Q0ZIV9">
    <property type="interactions" value="1656"/>
</dbReference>
<dbReference type="STRING" id="29760.Q0ZIV9"/>
<dbReference type="PaxDb" id="29760-VIT_00s0173g00170.t01"/>
<dbReference type="KEGG" id="vvi:4025013"/>
<dbReference type="KEGG" id="vvi:4025062"/>
<dbReference type="eggNOG" id="KOG3291">
    <property type="taxonomic scope" value="Eukaryota"/>
</dbReference>
<dbReference type="InParanoid" id="Q0ZIV9"/>
<dbReference type="OrthoDB" id="878268at71240"/>
<dbReference type="Proteomes" id="UP000009183">
    <property type="component" value="Chloroplast"/>
</dbReference>
<dbReference type="ExpressionAtlas" id="Q0ZIV9">
    <property type="expression patterns" value="baseline and differential"/>
</dbReference>
<dbReference type="GO" id="GO:0009507">
    <property type="term" value="C:chloroplast"/>
    <property type="evidence" value="ECO:0007669"/>
    <property type="project" value="UniProtKB-SubCell"/>
</dbReference>
<dbReference type="GO" id="GO:0005840">
    <property type="term" value="C:ribosome"/>
    <property type="evidence" value="ECO:0000318"/>
    <property type="project" value="GO_Central"/>
</dbReference>
<dbReference type="GO" id="GO:0015935">
    <property type="term" value="C:small ribosomal subunit"/>
    <property type="evidence" value="ECO:0007669"/>
    <property type="project" value="InterPro"/>
</dbReference>
<dbReference type="GO" id="GO:0003729">
    <property type="term" value="F:mRNA binding"/>
    <property type="evidence" value="ECO:0000318"/>
    <property type="project" value="GO_Central"/>
</dbReference>
<dbReference type="GO" id="GO:0019843">
    <property type="term" value="F:rRNA binding"/>
    <property type="evidence" value="ECO:0000318"/>
    <property type="project" value="GO_Central"/>
</dbReference>
<dbReference type="GO" id="GO:0003735">
    <property type="term" value="F:structural constituent of ribosome"/>
    <property type="evidence" value="ECO:0000318"/>
    <property type="project" value="GO_Central"/>
</dbReference>
<dbReference type="GO" id="GO:0000028">
    <property type="term" value="P:ribosomal small subunit assembly"/>
    <property type="evidence" value="ECO:0000318"/>
    <property type="project" value="GO_Central"/>
</dbReference>
<dbReference type="GO" id="GO:0006412">
    <property type="term" value="P:translation"/>
    <property type="evidence" value="ECO:0000318"/>
    <property type="project" value="GO_Central"/>
</dbReference>
<dbReference type="CDD" id="cd14871">
    <property type="entry name" value="uS7_Chloroplast"/>
    <property type="match status" value="1"/>
</dbReference>
<dbReference type="FunFam" id="1.10.455.10:FF:000001">
    <property type="entry name" value="30S ribosomal protein S7"/>
    <property type="match status" value="1"/>
</dbReference>
<dbReference type="Gene3D" id="1.10.455.10">
    <property type="entry name" value="Ribosomal protein S7 domain"/>
    <property type="match status" value="1"/>
</dbReference>
<dbReference type="HAMAP" id="MF_00480_B">
    <property type="entry name" value="Ribosomal_uS7_B"/>
    <property type="match status" value="1"/>
</dbReference>
<dbReference type="InterPro" id="IPR000235">
    <property type="entry name" value="Ribosomal_uS7"/>
</dbReference>
<dbReference type="InterPro" id="IPR005717">
    <property type="entry name" value="Ribosomal_uS7_bac/org-type"/>
</dbReference>
<dbReference type="InterPro" id="IPR020606">
    <property type="entry name" value="Ribosomal_uS7_CS"/>
</dbReference>
<dbReference type="InterPro" id="IPR023798">
    <property type="entry name" value="Ribosomal_uS7_dom"/>
</dbReference>
<dbReference type="InterPro" id="IPR036823">
    <property type="entry name" value="Ribosomal_uS7_dom_sf"/>
</dbReference>
<dbReference type="NCBIfam" id="TIGR01029">
    <property type="entry name" value="rpsG_bact"/>
    <property type="match status" value="1"/>
</dbReference>
<dbReference type="PANTHER" id="PTHR11205">
    <property type="entry name" value="RIBOSOMAL PROTEIN S7"/>
    <property type="match status" value="1"/>
</dbReference>
<dbReference type="Pfam" id="PF00177">
    <property type="entry name" value="Ribosomal_S7"/>
    <property type="match status" value="1"/>
</dbReference>
<dbReference type="PIRSF" id="PIRSF002122">
    <property type="entry name" value="RPS7p_RPS7a_RPS5e_RPS7o"/>
    <property type="match status" value="1"/>
</dbReference>
<dbReference type="SUPFAM" id="SSF47973">
    <property type="entry name" value="Ribosomal protein S7"/>
    <property type="match status" value="1"/>
</dbReference>
<dbReference type="PROSITE" id="PS00052">
    <property type="entry name" value="RIBOSOMAL_S7"/>
    <property type="match status" value="1"/>
</dbReference>
<evidence type="ECO:0000250" key="1"/>
<evidence type="ECO:0000255" key="2">
    <source>
        <dbReference type="HAMAP-Rule" id="MF_00480"/>
    </source>
</evidence>
<evidence type="ECO:0000305" key="3"/>
<organism>
    <name type="scientific">Vitis vinifera</name>
    <name type="common">Grape</name>
    <dbReference type="NCBI Taxonomy" id="29760"/>
    <lineage>
        <taxon>Eukaryota</taxon>
        <taxon>Viridiplantae</taxon>
        <taxon>Streptophyta</taxon>
        <taxon>Embryophyta</taxon>
        <taxon>Tracheophyta</taxon>
        <taxon>Spermatophyta</taxon>
        <taxon>Magnoliopsida</taxon>
        <taxon>eudicotyledons</taxon>
        <taxon>Gunneridae</taxon>
        <taxon>Pentapetalae</taxon>
        <taxon>rosids</taxon>
        <taxon>Vitales</taxon>
        <taxon>Vitaceae</taxon>
        <taxon>Viteae</taxon>
        <taxon>Vitis</taxon>
    </lineage>
</organism>
<sequence length="155" mass="17359">MSRRGTAEEKTAKSDPIYRNRLVNMLVNRILKHGKKSLAYQIIYRSVKKIQQKTETNPLSVLRQAIRGVTPDIAVKARRVGGSTHQVPIEIGSTQGKALAIRWLLGASRKRPGRNMAFKLSSELVDAAKGSGDAIRKKEETHRMAEANRAFAHFR</sequence>
<comment type="function">
    <text evidence="1">One of the primary rRNA binding proteins, it binds directly to 16S rRNA where it nucleates assembly of the head domain of the 30S subunit.</text>
</comment>
<comment type="subunit">
    <text>Part of the 30S ribosomal subunit.</text>
</comment>
<comment type="subcellular location">
    <subcellularLocation>
        <location>Plastid</location>
        <location>Chloroplast</location>
    </subcellularLocation>
</comment>
<comment type="similarity">
    <text evidence="3">Belongs to the universal ribosomal protein uS7 family.</text>
</comment>
<feature type="chain" id="PRO_0000277062" description="Small ribosomal subunit protein uS7cz/uS7cy">
    <location>
        <begin position="1"/>
        <end position="155"/>
    </location>
</feature>
<keyword id="KW-0150">Chloroplast</keyword>
<keyword id="KW-0934">Plastid</keyword>
<keyword id="KW-1185">Reference proteome</keyword>
<keyword id="KW-0687">Ribonucleoprotein</keyword>
<keyword id="KW-0689">Ribosomal protein</keyword>
<keyword id="KW-0694">RNA-binding</keyword>
<keyword id="KW-0699">rRNA-binding</keyword>
<gene>
    <name type="primary">rps7-A</name>
</gene>
<gene>
    <name type="primary">rps7-B</name>
</gene>
<protein>
    <recommendedName>
        <fullName evidence="2">Small ribosomal subunit protein uS7cz/uS7cy</fullName>
    </recommendedName>
    <alternativeName>
        <fullName>30S ribosomal protein S7, chloroplastic</fullName>
    </alternativeName>
</protein>
<accession>Q0ZIV9</accession>
<reference key="1">
    <citation type="journal article" date="2006" name="BMC Evol. Biol.">
        <title>Phylogenetic analyses of Vitis (Vitaceae) based on complete chloroplast genome sequences: effects of taxon sampling and phylogenetic methods on resolving relationships among rosids.</title>
        <authorList>
            <person name="Jansen R.K."/>
            <person name="Kaittanis C."/>
            <person name="Lee S.-B."/>
            <person name="Saski C."/>
            <person name="Tomkins J."/>
            <person name="Alverson A.J."/>
            <person name="Daniell H."/>
        </authorList>
    </citation>
    <scope>NUCLEOTIDE SEQUENCE [LARGE SCALE GENOMIC DNA]</scope>
    <source>
        <strain>cv. Maxxa</strain>
    </source>
</reference>